<sequence>MFNPYPQKKKRQTRNYTGPWRKTPGRLLGLLLIRFYQITLSGFIGNQCRHLPTCSEYTYEAIARHGLWAGAWMGFFRIIRCGPFGTHGFEPVPTSLGNSYCFYKPWCYWKISTKHNK</sequence>
<name>YIDD_BARHE</name>
<proteinExistence type="inferred from homology"/>
<gene>
    <name type="ordered locus">BH07670</name>
</gene>
<feature type="chain" id="PRO_0000253080" description="Putative membrane protein insertion efficiency factor">
    <location>
        <begin position="1"/>
        <end position="117"/>
    </location>
</feature>
<reference key="1">
    <citation type="journal article" date="2004" name="Proc. Natl. Acad. Sci. U.S.A.">
        <title>The louse-borne human pathogen Bartonella quintana is a genomic derivative of the zoonotic agent Bartonella henselae.</title>
        <authorList>
            <person name="Alsmark U.C.M."/>
            <person name="Frank A.C."/>
            <person name="Karlberg E.O."/>
            <person name="Legault B.-A."/>
            <person name="Ardell D.H."/>
            <person name="Canbaeck B."/>
            <person name="Eriksson A.-S."/>
            <person name="Naeslund A.K."/>
            <person name="Handley S.A."/>
            <person name="Huvet M."/>
            <person name="La Scola B."/>
            <person name="Holmberg M."/>
            <person name="Andersson S.G.E."/>
        </authorList>
    </citation>
    <scope>NUCLEOTIDE SEQUENCE [LARGE SCALE GENOMIC DNA]</scope>
    <source>
        <strain>ATCC 49882 / DSM 28221 / CCUG 30454 / Houston 1</strain>
    </source>
</reference>
<protein>
    <recommendedName>
        <fullName evidence="1">Putative membrane protein insertion efficiency factor</fullName>
    </recommendedName>
</protein>
<evidence type="ECO:0000255" key="1">
    <source>
        <dbReference type="HAMAP-Rule" id="MF_00386"/>
    </source>
</evidence>
<comment type="function">
    <text evidence="1">Could be involved in insertion of integral membrane proteins into the membrane.</text>
</comment>
<comment type="subcellular location">
    <subcellularLocation>
        <location evidence="1">Cell inner membrane</location>
        <topology evidence="1">Peripheral membrane protein</topology>
        <orientation evidence="1">Cytoplasmic side</orientation>
    </subcellularLocation>
</comment>
<comment type="similarity">
    <text evidence="1">Belongs to the UPF0161 family.</text>
</comment>
<dbReference type="EMBL" id="BX897699">
    <property type="protein sequence ID" value="CAF27568.1"/>
    <property type="molecule type" value="Genomic_DNA"/>
</dbReference>
<dbReference type="PaxDb" id="283166-BH07670"/>
<dbReference type="DNASU" id="2865707"/>
<dbReference type="EnsemblBacteria" id="CAF27568">
    <property type="protein sequence ID" value="CAF27568"/>
    <property type="gene ID" value="BH07670"/>
</dbReference>
<dbReference type="KEGG" id="bhe:BH07670"/>
<dbReference type="eggNOG" id="COG0759">
    <property type="taxonomic scope" value="Bacteria"/>
</dbReference>
<dbReference type="OrthoDB" id="9801753at2"/>
<dbReference type="Proteomes" id="UP000000421">
    <property type="component" value="Chromosome"/>
</dbReference>
<dbReference type="GO" id="GO:0005886">
    <property type="term" value="C:plasma membrane"/>
    <property type="evidence" value="ECO:0007669"/>
    <property type="project" value="UniProtKB-SubCell"/>
</dbReference>
<dbReference type="HAMAP" id="MF_00386">
    <property type="entry name" value="UPF0161_YidD"/>
    <property type="match status" value="1"/>
</dbReference>
<dbReference type="InterPro" id="IPR002696">
    <property type="entry name" value="Membr_insert_effic_factor_YidD"/>
</dbReference>
<dbReference type="NCBIfam" id="TIGR00278">
    <property type="entry name" value="membrane protein insertion efficiency factor YidD"/>
    <property type="match status" value="1"/>
</dbReference>
<dbReference type="PANTHER" id="PTHR33383">
    <property type="entry name" value="MEMBRANE PROTEIN INSERTION EFFICIENCY FACTOR-RELATED"/>
    <property type="match status" value="1"/>
</dbReference>
<dbReference type="PANTHER" id="PTHR33383:SF1">
    <property type="entry name" value="MEMBRANE PROTEIN INSERTION EFFICIENCY FACTOR-RELATED"/>
    <property type="match status" value="1"/>
</dbReference>
<dbReference type="Pfam" id="PF01809">
    <property type="entry name" value="YidD"/>
    <property type="match status" value="1"/>
</dbReference>
<dbReference type="SMART" id="SM01234">
    <property type="entry name" value="Haemolytic"/>
    <property type="match status" value="1"/>
</dbReference>
<organism>
    <name type="scientific">Bartonella henselae (strain ATCC 49882 / DSM 28221 / CCUG 30454 / Houston 1)</name>
    <name type="common">Rochalimaea henselae</name>
    <dbReference type="NCBI Taxonomy" id="283166"/>
    <lineage>
        <taxon>Bacteria</taxon>
        <taxon>Pseudomonadati</taxon>
        <taxon>Pseudomonadota</taxon>
        <taxon>Alphaproteobacteria</taxon>
        <taxon>Hyphomicrobiales</taxon>
        <taxon>Bartonellaceae</taxon>
        <taxon>Bartonella</taxon>
    </lineage>
</organism>
<keyword id="KW-0997">Cell inner membrane</keyword>
<keyword id="KW-1003">Cell membrane</keyword>
<keyword id="KW-0472">Membrane</keyword>
<accession>Q6G3K0</accession>